<name>OCA5_EREGS</name>
<reference key="1">
    <citation type="journal article" date="2004" name="Science">
        <title>The Ashbya gossypii genome as a tool for mapping the ancient Saccharomyces cerevisiae genome.</title>
        <authorList>
            <person name="Dietrich F.S."/>
            <person name="Voegeli S."/>
            <person name="Brachat S."/>
            <person name="Lerch A."/>
            <person name="Gates K."/>
            <person name="Steiner S."/>
            <person name="Mohr C."/>
            <person name="Poehlmann R."/>
            <person name="Luedi P."/>
            <person name="Choi S."/>
            <person name="Wing R.A."/>
            <person name="Flavier A."/>
            <person name="Gaffney T.D."/>
            <person name="Philippsen P."/>
        </authorList>
    </citation>
    <scope>NUCLEOTIDE SEQUENCE [LARGE SCALE GENOMIC DNA]</scope>
    <source>
        <strain>ATCC 10895 / CBS 109.51 / FGSC 9923 / NRRL Y-1056</strain>
    </source>
</reference>
<reference key="2">
    <citation type="journal article" date="2013" name="G3 (Bethesda)">
        <title>Genomes of Ashbya fungi isolated from insects reveal four mating-type loci, numerous translocations, lack of transposons, and distinct gene duplications.</title>
        <authorList>
            <person name="Dietrich F.S."/>
            <person name="Voegeli S."/>
            <person name="Kuo S."/>
            <person name="Philippsen P."/>
        </authorList>
    </citation>
    <scope>GENOME REANNOTATION</scope>
    <source>
        <strain>ATCC 10895 / CBS 109.51 / FGSC 9923 / NRRL Y-1056</strain>
    </source>
</reference>
<organism>
    <name type="scientific">Eremothecium gossypii (strain ATCC 10895 / CBS 109.51 / FGSC 9923 / NRRL Y-1056)</name>
    <name type="common">Yeast</name>
    <name type="synonym">Ashbya gossypii</name>
    <dbReference type="NCBI Taxonomy" id="284811"/>
    <lineage>
        <taxon>Eukaryota</taxon>
        <taxon>Fungi</taxon>
        <taxon>Dikarya</taxon>
        <taxon>Ascomycota</taxon>
        <taxon>Saccharomycotina</taxon>
        <taxon>Saccharomycetes</taxon>
        <taxon>Saccharomycetales</taxon>
        <taxon>Saccharomycetaceae</taxon>
        <taxon>Eremothecium</taxon>
    </lineage>
</organism>
<proteinExistence type="inferred from homology"/>
<feature type="chain" id="PRO_0000408205" description="Oxidant-induced cell-cycle arrest protein 5">
    <location>
        <begin position="1"/>
        <end position="560"/>
    </location>
</feature>
<feature type="domain" description="Rab-GAP TBC">
    <location>
        <begin position="39"/>
        <end position="348"/>
    </location>
</feature>
<feature type="region of interest" description="Disordered" evidence="2">
    <location>
        <begin position="401"/>
        <end position="431"/>
    </location>
</feature>
<feature type="region of interest" description="Disordered" evidence="2">
    <location>
        <begin position="497"/>
        <end position="519"/>
    </location>
</feature>
<feature type="compositionally biased region" description="Polar residues" evidence="2">
    <location>
        <begin position="412"/>
        <end position="423"/>
    </location>
</feature>
<feature type="compositionally biased region" description="Low complexity" evidence="2">
    <location>
        <begin position="497"/>
        <end position="518"/>
    </location>
</feature>
<comment type="subcellular location">
    <subcellularLocation>
        <location evidence="1">Cytoplasm</location>
    </subcellularLocation>
</comment>
<comment type="similarity">
    <text evidence="3">Belongs to the OCA5 family.</text>
</comment>
<accession>Q753Y0</accession>
<sequence length="560" mass="65472">MALQRNSKQNQQQWYRELVNKVIQLLQQNDHDSLALIARNCGVPPQLRHLVWPVLLKYHPFVISPSILSNTLIFDKTEDKWVYECENRARRDVEQAVMHDLQKFFVNKRSDQHMPLPDIEQHMRFLRDTIMRFLDKWERVFKYEVALAWIAIGLAEWVPIDGWGESAPGGGGVCSEDMALPKGRSTDVPVLQGKRHHITIRSLYKEYPLPRELSSRLTKRCFNFYDTFERLVLVILHCPDVTRTKMKVANGRNYPFISGGDVLFQTQLFFKIFQMTLPELYQPFTDEESLQSSRKADWIYWWFKACGAKVMHKQDRAHLWDVLLGWRPHPSTLNFYLDYNNKSFAHLYNTKLNLDPQFFHKVCKHGNDHFWFPDLDTLPLGSPGLETDCQVVNELIRHNSYESKDTGAPGTPSKTSQAGNNYRSPIRPSQKHQKDIPFSLIDPHVQLIFIYIAILQQNEFKLLEFEEAEITEFLTKVPLLSKTDDYSYKRLYDEESTSLSSTDTEDSQNSSSRPSTSSHMMIEVGNDDKIANTFDDLSQLAGDIWRKWMWFEFEESQDSV</sequence>
<gene>
    <name type="primary">OCA5</name>
    <name type="ordered locus">AFR192W</name>
</gene>
<keyword id="KW-0963">Cytoplasm</keyword>
<keyword id="KW-1185">Reference proteome</keyword>
<protein>
    <recommendedName>
        <fullName>Oxidant-induced cell-cycle arrest protein 5</fullName>
    </recommendedName>
</protein>
<evidence type="ECO:0000250" key="1"/>
<evidence type="ECO:0000256" key="2">
    <source>
        <dbReference type="SAM" id="MobiDB-lite"/>
    </source>
</evidence>
<evidence type="ECO:0000305" key="3"/>
<dbReference type="EMBL" id="AE016819">
    <property type="protein sequence ID" value="AAS53563.2"/>
    <property type="molecule type" value="Genomic_DNA"/>
</dbReference>
<dbReference type="RefSeq" id="NP_985739.2">
    <property type="nucleotide sequence ID" value="NM_211093.2"/>
</dbReference>
<dbReference type="FunCoup" id="Q753Y0">
    <property type="interactions" value="55"/>
</dbReference>
<dbReference type="STRING" id="284811.Q753Y0"/>
<dbReference type="EnsemblFungi" id="AAS53563">
    <property type="protein sequence ID" value="AAS53563"/>
    <property type="gene ID" value="AGOS_AFR192W"/>
</dbReference>
<dbReference type="GeneID" id="4621997"/>
<dbReference type="KEGG" id="ago:AGOS_AFR192W"/>
<dbReference type="eggNOG" id="ENOG502QVXN">
    <property type="taxonomic scope" value="Eukaryota"/>
</dbReference>
<dbReference type="HOGENOM" id="CLU_028817_0_0_1"/>
<dbReference type="InParanoid" id="Q753Y0"/>
<dbReference type="OMA" id="LRFKVWP"/>
<dbReference type="OrthoDB" id="27140at2759"/>
<dbReference type="Proteomes" id="UP000000591">
    <property type="component" value="Chromosome VI"/>
</dbReference>
<dbReference type="GO" id="GO:0005737">
    <property type="term" value="C:cytoplasm"/>
    <property type="evidence" value="ECO:0007669"/>
    <property type="project" value="UniProtKB-SubCell"/>
</dbReference>
<dbReference type="Gene3D" id="1.10.472.80">
    <property type="entry name" value="Ypt/Rab-GAP domain of gyp1p, domain 3"/>
    <property type="match status" value="1"/>
</dbReference>
<dbReference type="InterPro" id="IPR000195">
    <property type="entry name" value="Rab-GAP-TBC_dom"/>
</dbReference>
<dbReference type="InterPro" id="IPR035969">
    <property type="entry name" value="Rab-GAP_TBC_sf"/>
</dbReference>
<dbReference type="SMART" id="SM00164">
    <property type="entry name" value="TBC"/>
    <property type="match status" value="1"/>
</dbReference>
<dbReference type="SUPFAM" id="SSF47923">
    <property type="entry name" value="Ypt/Rab-GAP domain of gyp1p"/>
    <property type="match status" value="1"/>
</dbReference>